<evidence type="ECO:0000255" key="1">
    <source>
        <dbReference type="PROSITE-ProRule" id="PRU01182"/>
    </source>
</evidence>
<evidence type="ECO:0000305" key="2"/>
<comment type="similarity">
    <text evidence="2">Belongs to the UPF0758 family.</text>
</comment>
<reference key="1">
    <citation type="journal article" date="2006" name="J. Bacteriol.">
        <title>The genome sequence of the obligately chemolithoautotrophic, facultatively anaerobic bacterium Thiobacillus denitrificans.</title>
        <authorList>
            <person name="Beller H.R."/>
            <person name="Chain P.S."/>
            <person name="Letain T.E."/>
            <person name="Chakicherla A."/>
            <person name="Larimer F.W."/>
            <person name="Richardson P.M."/>
            <person name="Coleman M.A."/>
            <person name="Wood A.P."/>
            <person name="Kelly D.P."/>
        </authorList>
    </citation>
    <scope>NUCLEOTIDE SEQUENCE [LARGE SCALE GENOMIC DNA]</scope>
    <source>
        <strain>ATCC 25259 / T1</strain>
    </source>
</reference>
<dbReference type="EMBL" id="CP000116">
    <property type="protein sequence ID" value="AAZ98541.1"/>
    <property type="molecule type" value="Genomic_DNA"/>
</dbReference>
<dbReference type="RefSeq" id="WP_011313100.1">
    <property type="nucleotide sequence ID" value="NC_007404.1"/>
</dbReference>
<dbReference type="SMR" id="Q3SFR5"/>
<dbReference type="STRING" id="292415.Tbd_2588"/>
<dbReference type="KEGG" id="tbd:Tbd_2588"/>
<dbReference type="eggNOG" id="COG2003">
    <property type="taxonomic scope" value="Bacteria"/>
</dbReference>
<dbReference type="HOGENOM" id="CLU_073529_0_1_4"/>
<dbReference type="OrthoDB" id="9804482at2"/>
<dbReference type="Proteomes" id="UP000008291">
    <property type="component" value="Chromosome"/>
</dbReference>
<dbReference type="GO" id="GO:0046872">
    <property type="term" value="F:metal ion binding"/>
    <property type="evidence" value="ECO:0007669"/>
    <property type="project" value="UniProtKB-KW"/>
</dbReference>
<dbReference type="GO" id="GO:0008237">
    <property type="term" value="F:metallopeptidase activity"/>
    <property type="evidence" value="ECO:0007669"/>
    <property type="project" value="UniProtKB-KW"/>
</dbReference>
<dbReference type="GO" id="GO:0006508">
    <property type="term" value="P:proteolysis"/>
    <property type="evidence" value="ECO:0007669"/>
    <property type="project" value="UniProtKB-KW"/>
</dbReference>
<dbReference type="CDD" id="cd08071">
    <property type="entry name" value="MPN_DUF2466"/>
    <property type="match status" value="1"/>
</dbReference>
<dbReference type="Gene3D" id="3.40.140.10">
    <property type="entry name" value="Cytidine Deaminase, domain 2"/>
    <property type="match status" value="1"/>
</dbReference>
<dbReference type="InterPro" id="IPR037518">
    <property type="entry name" value="MPN"/>
</dbReference>
<dbReference type="InterPro" id="IPR025657">
    <property type="entry name" value="RadC_JAB"/>
</dbReference>
<dbReference type="InterPro" id="IPR010994">
    <property type="entry name" value="RuvA_2-like"/>
</dbReference>
<dbReference type="InterPro" id="IPR001405">
    <property type="entry name" value="UPF0758"/>
</dbReference>
<dbReference type="InterPro" id="IPR020891">
    <property type="entry name" value="UPF0758_CS"/>
</dbReference>
<dbReference type="InterPro" id="IPR046778">
    <property type="entry name" value="UPF0758_N"/>
</dbReference>
<dbReference type="NCBIfam" id="NF000642">
    <property type="entry name" value="PRK00024.1"/>
    <property type="match status" value="1"/>
</dbReference>
<dbReference type="NCBIfam" id="TIGR00608">
    <property type="entry name" value="radc"/>
    <property type="match status" value="1"/>
</dbReference>
<dbReference type="PANTHER" id="PTHR30471">
    <property type="entry name" value="DNA REPAIR PROTEIN RADC"/>
    <property type="match status" value="1"/>
</dbReference>
<dbReference type="PANTHER" id="PTHR30471:SF3">
    <property type="entry name" value="UPF0758 PROTEIN YEES-RELATED"/>
    <property type="match status" value="1"/>
</dbReference>
<dbReference type="Pfam" id="PF04002">
    <property type="entry name" value="RadC"/>
    <property type="match status" value="1"/>
</dbReference>
<dbReference type="Pfam" id="PF20582">
    <property type="entry name" value="UPF0758_N"/>
    <property type="match status" value="1"/>
</dbReference>
<dbReference type="SUPFAM" id="SSF47781">
    <property type="entry name" value="RuvA domain 2-like"/>
    <property type="match status" value="1"/>
</dbReference>
<dbReference type="PROSITE" id="PS50249">
    <property type="entry name" value="MPN"/>
    <property type="match status" value="1"/>
</dbReference>
<dbReference type="PROSITE" id="PS01302">
    <property type="entry name" value="UPF0758"/>
    <property type="match status" value="1"/>
</dbReference>
<accession>Q3SFR5</accession>
<proteinExistence type="inferred from homology"/>
<feature type="chain" id="PRO_1000001701" description="UPF0758 protein Tbd_2588">
    <location>
        <begin position="1"/>
        <end position="224"/>
    </location>
</feature>
<feature type="domain" description="MPN" evidence="1">
    <location>
        <begin position="102"/>
        <end position="224"/>
    </location>
</feature>
<feature type="short sequence motif" description="JAMM motif" evidence="1">
    <location>
        <begin position="173"/>
        <end position="186"/>
    </location>
</feature>
<feature type="binding site" evidence="1">
    <location>
        <position position="173"/>
    </location>
    <ligand>
        <name>Zn(2+)</name>
        <dbReference type="ChEBI" id="CHEBI:29105"/>
        <note>catalytic</note>
    </ligand>
</feature>
<feature type="binding site" evidence="1">
    <location>
        <position position="175"/>
    </location>
    <ligand>
        <name>Zn(2+)</name>
        <dbReference type="ChEBI" id="CHEBI:29105"/>
        <note>catalytic</note>
    </ligand>
</feature>
<feature type="binding site" evidence="1">
    <location>
        <position position="186"/>
    </location>
    <ligand>
        <name>Zn(2+)</name>
        <dbReference type="ChEBI" id="CHEBI:29105"/>
        <note>catalytic</note>
    </ligand>
</feature>
<keyword id="KW-0378">Hydrolase</keyword>
<keyword id="KW-0479">Metal-binding</keyword>
<keyword id="KW-0482">Metalloprotease</keyword>
<keyword id="KW-0645">Protease</keyword>
<keyword id="KW-1185">Reference proteome</keyword>
<keyword id="KW-0862">Zinc</keyword>
<name>Y2588_THIDA</name>
<protein>
    <recommendedName>
        <fullName>UPF0758 protein Tbd_2588</fullName>
    </recommendedName>
</protein>
<gene>
    <name type="ordered locus">Tbd_2588</name>
</gene>
<sequence length="224" mass="24304">MAIRDWPEDARPREKLLKQGAAALTDAELVAVFLRTGVAGKSAVDLGRDLIERFGGLGALCRADRVAACRAPGVGEAKYALLQAVMEMARRTLAEDMQAGDALSSPAAVRDYLRLILRDKEYEVFCCVFLNAQNRVIAVEELFRGTLTQTSVYPREIVKRALAHNAAAMILAHNHPSGVNEPSQADRSLTRRLAEALALVDIRVLDHFIIAGASALSFAEAGHL</sequence>
<organism>
    <name type="scientific">Thiobacillus denitrificans (strain ATCC 25259 / T1)</name>
    <dbReference type="NCBI Taxonomy" id="292415"/>
    <lineage>
        <taxon>Bacteria</taxon>
        <taxon>Pseudomonadati</taxon>
        <taxon>Pseudomonadota</taxon>
        <taxon>Betaproteobacteria</taxon>
        <taxon>Nitrosomonadales</taxon>
        <taxon>Thiobacillaceae</taxon>
        <taxon>Thiobacillus</taxon>
    </lineage>
</organism>